<protein>
    <recommendedName>
        <fullName evidence="8 11">Protein movement modulator</fullName>
    </recommendedName>
    <alternativeName>
        <fullName>Protein tweety-2</fullName>
        <shortName>Dttyh2</shortName>
    </alternativeName>
</protein>
<organism evidence="12">
    <name type="scientific">Drosophila melanogaster</name>
    <name type="common">Fruit fly</name>
    <dbReference type="NCBI Taxonomy" id="7227"/>
    <lineage>
        <taxon>Eukaryota</taxon>
        <taxon>Metazoa</taxon>
        <taxon>Ecdysozoa</taxon>
        <taxon>Arthropoda</taxon>
        <taxon>Hexapoda</taxon>
        <taxon>Insecta</taxon>
        <taxon>Pterygota</taxon>
        <taxon>Neoptera</taxon>
        <taxon>Endopterygota</taxon>
        <taxon>Diptera</taxon>
        <taxon>Brachycera</taxon>
        <taxon>Muscomorpha</taxon>
        <taxon>Ephydroidea</taxon>
        <taxon>Drosophilidae</taxon>
        <taxon>Drosophila</taxon>
        <taxon>Sophophora</taxon>
    </lineage>
</organism>
<gene>
    <name evidence="8 11" type="primary">Motor</name>
    <name evidence="11" type="synonym">TTYH2</name>
    <name evidence="11" type="ORF">CG3638</name>
</gene>
<sequence length="655" mass="71406">MEQPSILVKILHSIPHVNYTFRRVNDTFNPDSDVYLEPTNNKLQCQQKGIELQSLVILASIPAGLLIGSLLGLLLYLLTRCCDRRQRKPSAQRCQSCSLVIITLMTCAAIGLGLYGNDDFHNGLLQAFGSGKSVEGLVLTLKRQTESIKHDLETRMAGHKVEQLVEKPHYNQTVVMLLIETSRLVTENTSRAVASLDSMVHYFMKAKGSENDTSLMGLLQLGEFYESIRWPATLAFLTVLLLLCTVLVIGVARRSRCTLIFFSVSGLFCIIICWLLAGVYLASSVAAGDFCMRPHDYMCRQVGMRSPYVDFLNCGTPRNRFILRLNESRDLVDRARESVEHMQRMSQETYPHIDIQRTLNAMDNDLEITLRNLTTLSATLDRRTIDMHYEEALRGLCGGGLLGLSLMMVAGLLTSFLLTILVYADSHAWIYLTKRPTLDADKSETAPLFPASNAPSASISPTAPLSTGTINRTLLHHQQASSGGGSGTLPGSGGGAGAGGGVGANGHNGVGPYRNGSAGLRQGLASPSSQSSHTSSTATYNNGTTSYHNSHQQHNNHLYSNHYSHSNNHYNNTQHRTNPAAGAVAAAVGVVSSGQRSPSPPPVYDLVHGTRSGHHTLGRLPSHHQQSATYLPGPNNGKYATLSKQCKTLESNDFY</sequence>
<evidence type="ECO:0000250" key="1">
    <source>
        <dbReference type="UniProtKB" id="Q9BSA4"/>
    </source>
</evidence>
<evidence type="ECO:0000255" key="2"/>
<evidence type="ECO:0000255" key="3">
    <source>
        <dbReference type="PROSITE-ProRule" id="PRU00498"/>
    </source>
</evidence>
<evidence type="ECO:0000256" key="4">
    <source>
        <dbReference type="SAM" id="MobiDB-lite"/>
    </source>
</evidence>
<evidence type="ECO:0000269" key="5">
    <source>
    </source>
</evidence>
<evidence type="ECO:0000269" key="6">
    <source>
    </source>
</evidence>
<evidence type="ECO:0000269" key="7">
    <source>
    </source>
</evidence>
<evidence type="ECO:0000303" key="8">
    <source>
    </source>
</evidence>
<evidence type="ECO:0000303" key="9">
    <source ref="4"/>
</evidence>
<evidence type="ECO:0000305" key="10"/>
<evidence type="ECO:0000312" key="11">
    <source>
        <dbReference type="FlyBase" id="FBgn0261444"/>
    </source>
</evidence>
<evidence type="ECO:0000312" key="12">
    <source>
        <dbReference type="Proteomes" id="UP000000803"/>
    </source>
</evidence>
<accession>Q9W5A5</accession>
<accession>A8WHI0</accession>
<accession>O97175</accession>
<accession>Q8IRY1</accession>
<accession>Q8IRY2</accession>
<accession>Q8IRY3</accession>
<accession>Q9U1L5</accession>
<dbReference type="EMBL" id="AE014298">
    <property type="protein sequence ID" value="AAF45597.2"/>
    <property type="molecule type" value="Genomic_DNA"/>
</dbReference>
<dbReference type="EMBL" id="AE014298">
    <property type="protein sequence ID" value="AAN09036.3"/>
    <property type="status" value="ALT_SEQ"/>
    <property type="molecule type" value="Genomic_DNA"/>
</dbReference>
<dbReference type="EMBL" id="AE014298">
    <property type="protein sequence ID" value="AAN09038.1"/>
    <property type="molecule type" value="Genomic_DNA"/>
</dbReference>
<dbReference type="EMBL" id="AL121806">
    <property type="protein sequence ID" value="CAB65886.1"/>
    <property type="status" value="ALT_SEQ"/>
    <property type="molecule type" value="Genomic_DNA"/>
</dbReference>
<dbReference type="EMBL" id="BT031126">
    <property type="protein sequence ID" value="ABX00748.1"/>
    <property type="molecule type" value="mRNA"/>
</dbReference>
<dbReference type="RefSeq" id="NP_001245460.1">
    <molecule id="Q9W5A5-2"/>
    <property type="nucleotide sequence ID" value="NM_001258531.2"/>
</dbReference>
<dbReference type="RefSeq" id="NP_726720.3">
    <property type="nucleotide sequence ID" value="NM_166872.3"/>
</dbReference>
<dbReference type="RefSeq" id="NP_726721.1">
    <molecule id="Q9W5A5-2"/>
    <property type="nucleotide sequence ID" value="NM_166873.3"/>
</dbReference>
<dbReference type="RefSeq" id="NP_726722.1">
    <molecule id="Q9W5A5-1"/>
    <property type="nucleotide sequence ID" value="NM_166874.3"/>
</dbReference>
<dbReference type="SMR" id="Q9W5A5"/>
<dbReference type="BioGRID" id="57634">
    <property type="interactions" value="2"/>
</dbReference>
<dbReference type="FunCoup" id="Q9W5A5">
    <property type="interactions" value="219"/>
</dbReference>
<dbReference type="STRING" id="7227.FBpp0303238"/>
<dbReference type="TCDB" id="1.A.48.1.5">
    <property type="family name" value="the anion channel tweety (tweety) family"/>
</dbReference>
<dbReference type="GlyGen" id="Q9W5A5">
    <property type="glycosylation" value="8 sites"/>
</dbReference>
<dbReference type="iPTMnet" id="Q9W5A5"/>
<dbReference type="PaxDb" id="7227-FBpp0070239"/>
<dbReference type="DNASU" id="31071"/>
<dbReference type="EnsemblMetazoa" id="FBtr0070249">
    <molecule id="Q9W5A5-2"/>
    <property type="protein sequence ID" value="FBpp0070239"/>
    <property type="gene ID" value="FBgn0261444"/>
</dbReference>
<dbReference type="EnsemblMetazoa" id="FBtr0308707">
    <molecule id="Q9W5A5-2"/>
    <property type="protein sequence ID" value="FBpp0300913"/>
    <property type="gene ID" value="FBgn0261444"/>
</dbReference>
<dbReference type="EnsemblMetazoa" id="FBtr0336978">
    <molecule id="Q9W5A5-1"/>
    <property type="protein sequence ID" value="FBpp0307920"/>
    <property type="gene ID" value="FBgn0261444"/>
</dbReference>
<dbReference type="GeneID" id="31071"/>
<dbReference type="KEGG" id="dme:Dmel_CG3638"/>
<dbReference type="UCSC" id="CG3638-RA">
    <molecule id="Q9W5A5-1"/>
    <property type="organism name" value="d. melanogaster"/>
</dbReference>
<dbReference type="AGR" id="FB:FBgn0261444"/>
<dbReference type="FlyBase" id="FBgn0261444">
    <property type="gene designation" value="Motor"/>
</dbReference>
<dbReference type="VEuPathDB" id="VectorBase:FBgn0261444"/>
<dbReference type="eggNOG" id="KOG4433">
    <property type="taxonomic scope" value="Eukaryota"/>
</dbReference>
<dbReference type="GeneTree" id="ENSGT00950000183060"/>
<dbReference type="InParanoid" id="Q9W5A5"/>
<dbReference type="OMA" id="NLCEEHE"/>
<dbReference type="OrthoDB" id="187568at2759"/>
<dbReference type="PhylomeDB" id="Q9W5A5"/>
<dbReference type="Reactome" id="R-DME-2672351">
    <property type="pathway name" value="Stimuli-sensing channels"/>
</dbReference>
<dbReference type="BioGRID-ORCS" id="31071">
    <property type="hits" value="0 hits in 3 CRISPR screens"/>
</dbReference>
<dbReference type="GenomeRNAi" id="31071"/>
<dbReference type="PRO" id="PR:Q9W5A5"/>
<dbReference type="Proteomes" id="UP000000803">
    <property type="component" value="Chromosome X"/>
</dbReference>
<dbReference type="Bgee" id="FBgn0261444">
    <property type="expression patterns" value="Expressed in intestinal stem cell (Drosophila) in digestive tract and 269 other cell types or tissues"/>
</dbReference>
<dbReference type="ExpressionAtlas" id="Q9W5A5">
    <property type="expression patterns" value="baseline and differential"/>
</dbReference>
<dbReference type="GO" id="GO:0034707">
    <property type="term" value="C:chloride channel complex"/>
    <property type="evidence" value="ECO:0007669"/>
    <property type="project" value="UniProtKB-KW"/>
</dbReference>
<dbReference type="GO" id="GO:0016020">
    <property type="term" value="C:membrane"/>
    <property type="evidence" value="ECO:0000255"/>
    <property type="project" value="FlyBase"/>
</dbReference>
<dbReference type="GO" id="GO:0005886">
    <property type="term" value="C:plasma membrane"/>
    <property type="evidence" value="ECO:0007005"/>
    <property type="project" value="FlyBase"/>
</dbReference>
<dbReference type="GO" id="GO:0005254">
    <property type="term" value="F:chloride channel activity"/>
    <property type="evidence" value="ECO:0000250"/>
    <property type="project" value="UniProtKB"/>
</dbReference>
<dbReference type="GO" id="GO:0005229">
    <property type="term" value="F:intracellularly calcium-gated chloride channel activity"/>
    <property type="evidence" value="ECO:0000318"/>
    <property type="project" value="GO_Central"/>
</dbReference>
<dbReference type="GO" id="GO:0072320">
    <property type="term" value="F:volume-sensitive chloride channel activity"/>
    <property type="evidence" value="ECO:0000318"/>
    <property type="project" value="GO_Central"/>
</dbReference>
<dbReference type="GO" id="GO:1902476">
    <property type="term" value="P:chloride transmembrane transport"/>
    <property type="evidence" value="ECO:0000255"/>
    <property type="project" value="FlyBase"/>
</dbReference>
<dbReference type="GO" id="GO:0006821">
    <property type="term" value="P:chloride transport"/>
    <property type="evidence" value="ECO:0000250"/>
    <property type="project" value="FlyBase"/>
</dbReference>
<dbReference type="GO" id="GO:0040013">
    <property type="term" value="P:negative regulation of locomotion"/>
    <property type="evidence" value="ECO:0000316"/>
    <property type="project" value="FlyBase"/>
</dbReference>
<dbReference type="CDD" id="cd07912">
    <property type="entry name" value="Tweety_N"/>
    <property type="match status" value="1"/>
</dbReference>
<dbReference type="InterPro" id="IPR006990">
    <property type="entry name" value="Tweety"/>
</dbReference>
<dbReference type="PANTHER" id="PTHR12424:SF18">
    <property type="entry name" value="PROTEIN TWEETY-2"/>
    <property type="match status" value="1"/>
</dbReference>
<dbReference type="PANTHER" id="PTHR12424">
    <property type="entry name" value="TWEETY-RELATED"/>
    <property type="match status" value="1"/>
</dbReference>
<dbReference type="Pfam" id="PF04906">
    <property type="entry name" value="Tweety"/>
    <property type="match status" value="1"/>
</dbReference>
<keyword id="KW-0025">Alternative splicing</keyword>
<keyword id="KW-1003">Cell membrane</keyword>
<keyword id="KW-0868">Chloride</keyword>
<keyword id="KW-0869">Chloride channel</keyword>
<keyword id="KW-0325">Glycoprotein</keyword>
<keyword id="KW-0407">Ion channel</keyword>
<keyword id="KW-0406">Ion transport</keyword>
<keyword id="KW-0472">Membrane</keyword>
<keyword id="KW-0597">Phosphoprotein</keyword>
<keyword id="KW-1185">Reference proteome</keyword>
<keyword id="KW-0812">Transmembrane</keyword>
<keyword id="KW-1133">Transmembrane helix</keyword>
<keyword id="KW-0813">Transport</keyword>
<name>TTYH2_DROME</name>
<proteinExistence type="evidence at protein level"/>
<reference key="1">
    <citation type="journal article" date="2000" name="Science">
        <title>The genome sequence of Drosophila melanogaster.</title>
        <authorList>
            <person name="Adams M.D."/>
            <person name="Celniker S.E."/>
            <person name="Holt R.A."/>
            <person name="Evans C.A."/>
            <person name="Gocayne J.D."/>
            <person name="Amanatides P.G."/>
            <person name="Scherer S.E."/>
            <person name="Li P.W."/>
            <person name="Hoskins R.A."/>
            <person name="Galle R.F."/>
            <person name="George R.A."/>
            <person name="Lewis S.E."/>
            <person name="Richards S."/>
            <person name="Ashburner M."/>
            <person name="Henderson S.N."/>
            <person name="Sutton G.G."/>
            <person name="Wortman J.R."/>
            <person name="Yandell M.D."/>
            <person name="Zhang Q."/>
            <person name="Chen L.X."/>
            <person name="Brandon R.C."/>
            <person name="Rogers Y.-H.C."/>
            <person name="Blazej R.G."/>
            <person name="Champe M."/>
            <person name="Pfeiffer B.D."/>
            <person name="Wan K.H."/>
            <person name="Doyle C."/>
            <person name="Baxter E.G."/>
            <person name="Helt G."/>
            <person name="Nelson C.R."/>
            <person name="Miklos G.L.G."/>
            <person name="Abril J.F."/>
            <person name="Agbayani A."/>
            <person name="An H.-J."/>
            <person name="Andrews-Pfannkoch C."/>
            <person name="Baldwin D."/>
            <person name="Ballew R.M."/>
            <person name="Basu A."/>
            <person name="Baxendale J."/>
            <person name="Bayraktaroglu L."/>
            <person name="Beasley E.M."/>
            <person name="Beeson K.Y."/>
            <person name="Benos P.V."/>
            <person name="Berman B.P."/>
            <person name="Bhandari D."/>
            <person name="Bolshakov S."/>
            <person name="Borkova D."/>
            <person name="Botchan M.R."/>
            <person name="Bouck J."/>
            <person name="Brokstein P."/>
            <person name="Brottier P."/>
            <person name="Burtis K.C."/>
            <person name="Busam D.A."/>
            <person name="Butler H."/>
            <person name="Cadieu E."/>
            <person name="Center A."/>
            <person name="Chandra I."/>
            <person name="Cherry J.M."/>
            <person name="Cawley S."/>
            <person name="Dahlke C."/>
            <person name="Davenport L.B."/>
            <person name="Davies P."/>
            <person name="de Pablos B."/>
            <person name="Delcher A."/>
            <person name="Deng Z."/>
            <person name="Mays A.D."/>
            <person name="Dew I."/>
            <person name="Dietz S.M."/>
            <person name="Dodson K."/>
            <person name="Doup L.E."/>
            <person name="Downes M."/>
            <person name="Dugan-Rocha S."/>
            <person name="Dunkov B.C."/>
            <person name="Dunn P."/>
            <person name="Durbin K.J."/>
            <person name="Evangelista C.C."/>
            <person name="Ferraz C."/>
            <person name="Ferriera S."/>
            <person name="Fleischmann W."/>
            <person name="Fosler C."/>
            <person name="Gabrielian A.E."/>
            <person name="Garg N.S."/>
            <person name="Gelbart W.M."/>
            <person name="Glasser K."/>
            <person name="Glodek A."/>
            <person name="Gong F."/>
            <person name="Gorrell J.H."/>
            <person name="Gu Z."/>
            <person name="Guan P."/>
            <person name="Harris M."/>
            <person name="Harris N.L."/>
            <person name="Harvey D.A."/>
            <person name="Heiman T.J."/>
            <person name="Hernandez J.R."/>
            <person name="Houck J."/>
            <person name="Hostin D."/>
            <person name="Houston K.A."/>
            <person name="Howland T.J."/>
            <person name="Wei M.-H."/>
            <person name="Ibegwam C."/>
            <person name="Jalali M."/>
            <person name="Kalush F."/>
            <person name="Karpen G.H."/>
            <person name="Ke Z."/>
            <person name="Kennison J.A."/>
            <person name="Ketchum K.A."/>
            <person name="Kimmel B.E."/>
            <person name="Kodira C.D."/>
            <person name="Kraft C.L."/>
            <person name="Kravitz S."/>
            <person name="Kulp D."/>
            <person name="Lai Z."/>
            <person name="Lasko P."/>
            <person name="Lei Y."/>
            <person name="Levitsky A.A."/>
            <person name="Li J.H."/>
            <person name="Li Z."/>
            <person name="Liang Y."/>
            <person name="Lin X."/>
            <person name="Liu X."/>
            <person name="Mattei B."/>
            <person name="McIntosh T.C."/>
            <person name="McLeod M.P."/>
            <person name="McPherson D."/>
            <person name="Merkulov G."/>
            <person name="Milshina N.V."/>
            <person name="Mobarry C."/>
            <person name="Morris J."/>
            <person name="Moshrefi A."/>
            <person name="Mount S.M."/>
            <person name="Moy M."/>
            <person name="Murphy B."/>
            <person name="Murphy L."/>
            <person name="Muzny D.M."/>
            <person name="Nelson D.L."/>
            <person name="Nelson D.R."/>
            <person name="Nelson K.A."/>
            <person name="Nixon K."/>
            <person name="Nusskern D.R."/>
            <person name="Pacleb J.M."/>
            <person name="Palazzolo M."/>
            <person name="Pittman G.S."/>
            <person name="Pan S."/>
            <person name="Pollard J."/>
            <person name="Puri V."/>
            <person name="Reese M.G."/>
            <person name="Reinert K."/>
            <person name="Remington K."/>
            <person name="Saunders R.D.C."/>
            <person name="Scheeler F."/>
            <person name="Shen H."/>
            <person name="Shue B.C."/>
            <person name="Siden-Kiamos I."/>
            <person name="Simpson M."/>
            <person name="Skupski M.P."/>
            <person name="Smith T.J."/>
            <person name="Spier E."/>
            <person name="Spradling A.C."/>
            <person name="Stapleton M."/>
            <person name="Strong R."/>
            <person name="Sun E."/>
            <person name="Svirskas R."/>
            <person name="Tector C."/>
            <person name="Turner R."/>
            <person name="Venter E."/>
            <person name="Wang A.H."/>
            <person name="Wang X."/>
            <person name="Wang Z.-Y."/>
            <person name="Wassarman D.A."/>
            <person name="Weinstock G.M."/>
            <person name="Weissenbach J."/>
            <person name="Williams S.M."/>
            <person name="Woodage T."/>
            <person name="Worley K.C."/>
            <person name="Wu D."/>
            <person name="Yang S."/>
            <person name="Yao Q.A."/>
            <person name="Ye J."/>
            <person name="Yeh R.-F."/>
            <person name="Zaveri J.S."/>
            <person name="Zhan M."/>
            <person name="Zhang G."/>
            <person name="Zhao Q."/>
            <person name="Zheng L."/>
            <person name="Zheng X.H."/>
            <person name="Zhong F.N."/>
            <person name="Zhong W."/>
            <person name="Zhou X."/>
            <person name="Zhu S.C."/>
            <person name="Zhu X."/>
            <person name="Smith H.O."/>
            <person name="Gibbs R.A."/>
            <person name="Myers E.W."/>
            <person name="Rubin G.M."/>
            <person name="Venter J.C."/>
        </authorList>
    </citation>
    <scope>NUCLEOTIDE SEQUENCE [LARGE SCALE GENOMIC DNA]</scope>
    <source>
        <strain>Berkeley</strain>
    </source>
</reference>
<reference key="2">
    <citation type="journal article" date="2002" name="Genome Biol.">
        <title>Annotation of the Drosophila melanogaster euchromatic genome: a systematic review.</title>
        <authorList>
            <person name="Misra S."/>
            <person name="Crosby M.A."/>
            <person name="Mungall C.J."/>
            <person name="Matthews B.B."/>
            <person name="Campbell K.S."/>
            <person name="Hradecky P."/>
            <person name="Huang Y."/>
            <person name="Kaminker J.S."/>
            <person name="Millburn G.H."/>
            <person name="Prochnik S.E."/>
            <person name="Smith C.D."/>
            <person name="Tupy J.L."/>
            <person name="Whitfield E.J."/>
            <person name="Bayraktaroglu L."/>
            <person name="Berman B.P."/>
            <person name="Bettencourt B.R."/>
            <person name="Celniker S.E."/>
            <person name="de Grey A.D.N.J."/>
            <person name="Drysdale R.A."/>
            <person name="Harris N.L."/>
            <person name="Richter J."/>
            <person name="Russo S."/>
            <person name="Schroeder A.J."/>
            <person name="Shu S.Q."/>
            <person name="Stapleton M."/>
            <person name="Yamada C."/>
            <person name="Ashburner M."/>
            <person name="Gelbart W.M."/>
            <person name="Rubin G.M."/>
            <person name="Lewis S.E."/>
        </authorList>
    </citation>
    <scope>GENOME REANNOTATION</scope>
    <scope>ALTERNATIVE SPLICING</scope>
    <source>
        <strain>Berkeley</strain>
    </source>
</reference>
<reference key="3">
    <citation type="journal article" date="2000" name="Science">
        <title>From sequence to chromosome: the tip of the X chromosome of D. melanogaster.</title>
        <authorList>
            <person name="Benos P.V."/>
            <person name="Gatt M.K."/>
            <person name="Ashburner M."/>
            <person name="Murphy L."/>
            <person name="Harris D."/>
            <person name="Barrell B.G."/>
            <person name="Ferraz C."/>
            <person name="Vidal S."/>
            <person name="Brun C."/>
            <person name="Demailles J."/>
            <person name="Cadieu E."/>
            <person name="Dreano S."/>
            <person name="Gloux S."/>
            <person name="Lelaure V."/>
            <person name="Mottier S."/>
            <person name="Galibert F."/>
            <person name="Borkova D."/>
            <person name="Minana B."/>
            <person name="Kafatos F.C."/>
            <person name="Louis C."/>
            <person name="Siden-Kiamos I."/>
            <person name="Bolshakov S."/>
            <person name="Papagiannakis G."/>
            <person name="Spanos L."/>
            <person name="Cox S."/>
            <person name="Madueno E."/>
            <person name="de Pablos B."/>
            <person name="Modolell J."/>
            <person name="Peter A."/>
            <person name="Schoettler P."/>
            <person name="Werner M."/>
            <person name="Mourkioti F."/>
            <person name="Beinert N."/>
            <person name="Dowe G."/>
            <person name="Schaefer U."/>
            <person name="Jaeckle H."/>
            <person name="Bucheton A."/>
            <person name="Callister D.M."/>
            <person name="Campbell L.A."/>
            <person name="Darlamitsou A."/>
            <person name="Henderson N.S."/>
            <person name="McMillan P.J."/>
            <person name="Salles C."/>
            <person name="Tait E.A."/>
            <person name="Valenti P."/>
            <person name="Saunders R.D.C."/>
            <person name="Glover D.M."/>
        </authorList>
    </citation>
    <scope>NUCLEOTIDE SEQUENCE [LARGE SCALE GENOMIC DNA]</scope>
    <source>
        <strain>Oregon-R</strain>
    </source>
</reference>
<reference key="4">
    <citation type="submission" date="2007-11" db="EMBL/GenBank/DDBJ databases">
        <authorList>
            <person name="Stapleton M."/>
            <person name="Carlson J.W."/>
            <person name="Frise E."/>
            <person name="Kapadia B."/>
            <person name="Park S."/>
            <person name="Wan K.H."/>
            <person name="Yu C."/>
            <person name="Celniker S.E."/>
        </authorList>
    </citation>
    <scope>NUCLEOTIDE SEQUENCE [LARGE SCALE MRNA] (ISOFORM B)</scope>
    <source>
        <strain>Berkeley</strain>
        <tissue>Embryo</tissue>
    </source>
</reference>
<reference key="5">
    <citation type="journal article" date="2006" name="Exp. Physiol.">
        <title>The Drosophila tweety family: molecular candidates for large-conductance Ca2+-activated Cl- channels.</title>
        <authorList>
            <person name="Suzuki M."/>
        </authorList>
    </citation>
    <scope>DISRUPTION PHENOTYPE</scope>
</reference>
<reference key="6">
    <citation type="journal article" date="2008" name="J. Proteome Res.">
        <title>Phosphoproteome analysis of Drosophila melanogaster embryos.</title>
        <authorList>
            <person name="Zhai B."/>
            <person name="Villen J."/>
            <person name="Beausoleil S.A."/>
            <person name="Mintseris J."/>
            <person name="Gygi S.P."/>
        </authorList>
    </citation>
    <scope>PHOSPHORYLATION [LARGE SCALE ANALYSIS] AT SER-597 AND SER-599</scope>
    <scope>IDENTIFICATION BY MASS SPECTROMETRY</scope>
    <source>
        <tissue>Embryo</tissue>
    </source>
</reference>
<reference key="7">
    <citation type="journal article" date="2024" name="Elife">
        <title>A microRNA that controls the emergence of embryonic movement.</title>
        <authorList>
            <person name="Menzies J.A.C."/>
            <person name="Maia Chagas A."/>
            <person name="Baden T."/>
            <person name="Alonso C.R."/>
        </authorList>
    </citation>
    <scope>FUNCTION</scope>
    <scope>DEVELOPMENTAL STAGE</scope>
    <scope>INDUCTION BY MIR-2B-1</scope>
</reference>
<comment type="function">
    <text evidence="1 7">Probable large-conductance Ca(2+)-activated chloride channel (By similarity). Modulator of embryonic movement (PubMed:38869942).</text>
</comment>
<comment type="catalytic activity">
    <reaction evidence="1">
        <text>chloride(in) = chloride(out)</text>
        <dbReference type="Rhea" id="RHEA:29823"/>
        <dbReference type="ChEBI" id="CHEBI:17996"/>
    </reaction>
</comment>
<comment type="subcellular location">
    <subcellularLocation>
        <location evidence="1">Cell membrane</location>
        <topology evidence="2">Multi-pass membrane protein</topology>
    </subcellularLocation>
</comment>
<comment type="alternative products">
    <event type="alternative splicing"/>
    <isoform>
        <id>Q9W5A5-1</id>
        <name evidence="11">A</name>
        <sequence type="displayed"/>
    </isoform>
    <isoform>
        <id>Q9W5A5-2</id>
        <name evidence="11">B</name>
        <sequence type="described" ref="VSP_029776"/>
    </isoform>
</comment>
<comment type="developmental stage">
    <text evidence="7">Expressed in embryonic chordotonal organs.</text>
</comment>
<comment type="induction">
    <text evidence="7">Down-regulated by the miRNA miR-2b-1.</text>
</comment>
<comment type="disruption phenotype">
    <text evidence="5">Death during development.</text>
</comment>
<comment type="similarity">
    <text evidence="10">Belongs to the tweety family.</text>
</comment>
<comment type="sequence caution" evidence="10">
    <conflict type="erroneous gene model prediction">
        <sequence resource="EMBL-CDS" id="AAN09036"/>
    </conflict>
</comment>
<comment type="sequence caution" evidence="10">
    <conflict type="erroneous gene model prediction">
        <sequence resource="EMBL-CDS" id="CAB65886"/>
    </conflict>
</comment>
<feature type="chain" id="PRO_0000312257" description="Protein movement modulator">
    <location>
        <begin position="1"/>
        <end position="655"/>
    </location>
</feature>
<feature type="topological domain" description="Extracellular" evidence="10">
    <location>
        <begin position="1"/>
        <end position="54"/>
    </location>
</feature>
<feature type="transmembrane region" description="Helical" evidence="2">
    <location>
        <begin position="55"/>
        <end position="75"/>
    </location>
</feature>
<feature type="topological domain" description="Cytoplasmic" evidence="10">
    <location>
        <begin position="76"/>
        <end position="95"/>
    </location>
</feature>
<feature type="transmembrane region" description="Helical" evidence="2">
    <location>
        <begin position="96"/>
        <end position="116"/>
    </location>
</feature>
<feature type="topological domain" description="Extracellular" evidence="10">
    <location>
        <begin position="117"/>
        <end position="231"/>
    </location>
</feature>
<feature type="transmembrane region" description="Helical" evidence="2">
    <location>
        <begin position="232"/>
        <end position="252"/>
    </location>
</feature>
<feature type="topological domain" description="Cytoplasmic" evidence="10">
    <location>
        <begin position="253"/>
        <end position="258"/>
    </location>
</feature>
<feature type="transmembrane region" description="Helical" evidence="2">
    <location>
        <begin position="259"/>
        <end position="279"/>
    </location>
</feature>
<feature type="topological domain" description="Extracellular" evidence="10">
    <location>
        <begin position="280"/>
        <end position="401"/>
    </location>
</feature>
<feature type="transmembrane region" description="Helical" evidence="2">
    <location>
        <begin position="402"/>
        <end position="422"/>
    </location>
</feature>
<feature type="topological domain" description="Cytoplasmic" evidence="10">
    <location>
        <begin position="423"/>
        <end position="655"/>
    </location>
</feature>
<feature type="region of interest" description="Disordered" evidence="4">
    <location>
        <begin position="446"/>
        <end position="576"/>
    </location>
</feature>
<feature type="compositionally biased region" description="Low complexity" evidence="4">
    <location>
        <begin position="450"/>
        <end position="464"/>
    </location>
</feature>
<feature type="compositionally biased region" description="Polar residues" evidence="4">
    <location>
        <begin position="465"/>
        <end position="480"/>
    </location>
</feature>
<feature type="compositionally biased region" description="Gly residues" evidence="4">
    <location>
        <begin position="482"/>
        <end position="509"/>
    </location>
</feature>
<feature type="compositionally biased region" description="Low complexity" evidence="4">
    <location>
        <begin position="526"/>
        <end position="539"/>
    </location>
</feature>
<feature type="compositionally biased region" description="Low complexity" evidence="4">
    <location>
        <begin position="546"/>
        <end position="576"/>
    </location>
</feature>
<feature type="modified residue" description="Phosphoserine" evidence="6">
    <location>
        <position position="597"/>
    </location>
</feature>
<feature type="modified residue" description="Phosphoserine" evidence="6">
    <location>
        <position position="599"/>
    </location>
</feature>
<feature type="glycosylation site" description="N-linked (GlcNAc...) asparagine" evidence="3">
    <location>
        <position position="18"/>
    </location>
</feature>
<feature type="glycosylation site" description="N-linked (GlcNAc...) asparagine" evidence="3">
    <location>
        <position position="25"/>
    </location>
</feature>
<feature type="glycosylation site" description="N-linked (GlcNAc...) asparagine" evidence="3">
    <location>
        <position position="171"/>
    </location>
</feature>
<feature type="glycosylation site" description="N-linked (GlcNAc...) asparagine" evidence="3">
    <location>
        <position position="188"/>
    </location>
</feature>
<feature type="glycosylation site" description="N-linked (GlcNAc...) asparagine" evidence="3">
    <location>
        <position position="211"/>
    </location>
</feature>
<feature type="glycosylation site" description="N-linked (GlcNAc...) asparagine" evidence="3">
    <location>
        <position position="326"/>
    </location>
</feature>
<feature type="glycosylation site" description="N-linked (GlcNAc...) asparagine" evidence="3">
    <location>
        <position position="372"/>
    </location>
</feature>
<feature type="splice variant" id="VSP_029776" description="In isoform B." evidence="9">
    <location>
        <begin position="38"/>
        <end position="53"/>
    </location>
</feature>